<keyword id="KW-0002">3D-structure</keyword>
<keyword id="KW-0007">Acetylation</keyword>
<keyword id="KW-0012">Acyltransferase</keyword>
<keyword id="KW-0021">Allosteric enzyme</keyword>
<keyword id="KW-1032">Host cell membrane</keyword>
<keyword id="KW-1035">Host cytoplasm</keyword>
<keyword id="KW-1037">Host cytoskeleton</keyword>
<keyword id="KW-1043">Host membrane</keyword>
<keyword id="KW-1048">Host nucleus</keyword>
<keyword id="KW-0472">Membrane</keyword>
<keyword id="KW-0614">Plasmid</keyword>
<keyword id="KW-0964">Secreted</keyword>
<keyword id="KW-0808">Transferase</keyword>
<keyword id="KW-0843">Virulence</keyword>
<protein>
    <recommendedName>
        <fullName evidence="11">Serine/threonine-protein acetyltransferase HopZ1a</fullName>
        <ecNumber evidence="4">2.3.1.-</ecNumber>
    </recommendedName>
    <alternativeName>
        <fullName evidence="9">Protein orf34</fullName>
    </alternativeName>
</protein>
<dbReference type="EC" id="2.3.1.-" evidence="4"/>
<dbReference type="EMBL" id="AY342395">
    <property type="protein sequence ID" value="AAR02168.1"/>
    <property type="molecule type" value="Genomic_DNA"/>
</dbReference>
<dbReference type="EMBL" id="RBUE01000110">
    <property type="protein sequence ID" value="RMU63652.1"/>
    <property type="molecule type" value="Genomic_DNA"/>
</dbReference>
<dbReference type="RefSeq" id="NP_940719.1">
    <property type="nucleotide sequence ID" value="NC_005205.1"/>
</dbReference>
<dbReference type="RefSeq" id="WP_011152901.1">
    <property type="nucleotide sequence ID" value="NC_005205.1"/>
</dbReference>
<dbReference type="PDB" id="5KLP">
    <property type="method" value="X-ray"/>
    <property type="resolution" value="2.00 A"/>
    <property type="chains" value="A/B/C=29-369"/>
</dbReference>
<dbReference type="PDB" id="5KLQ">
    <property type="method" value="X-ray"/>
    <property type="resolution" value="3.40 A"/>
    <property type="chains" value="A/B/C=29-369"/>
</dbReference>
<dbReference type="PDBsum" id="5KLP"/>
<dbReference type="PDBsum" id="5KLQ"/>
<dbReference type="SMR" id="Q6VE93"/>
<dbReference type="iPTMnet" id="Q6VE93"/>
<dbReference type="PATRIC" id="fig|321.63.peg.4110"/>
<dbReference type="PHI-base" id="PHI:9893"/>
<dbReference type="GO" id="GO:0005576">
    <property type="term" value="C:extracellular region"/>
    <property type="evidence" value="ECO:0007669"/>
    <property type="project" value="UniProtKB-SubCell"/>
</dbReference>
<dbReference type="GO" id="GO:0030430">
    <property type="term" value="C:host cell cytoplasm"/>
    <property type="evidence" value="ECO:0007669"/>
    <property type="project" value="UniProtKB-KW"/>
</dbReference>
<dbReference type="GO" id="GO:0042025">
    <property type="term" value="C:host cell nucleus"/>
    <property type="evidence" value="ECO:0000314"/>
    <property type="project" value="UniProtKB"/>
</dbReference>
<dbReference type="GO" id="GO:0020002">
    <property type="term" value="C:host cell plasma membrane"/>
    <property type="evidence" value="ECO:0000314"/>
    <property type="project" value="UniProtKB"/>
</dbReference>
<dbReference type="GO" id="GO:0044163">
    <property type="term" value="C:host cytoskeleton"/>
    <property type="evidence" value="ECO:0007669"/>
    <property type="project" value="UniProtKB-SubCell"/>
</dbReference>
<dbReference type="GO" id="GO:0016020">
    <property type="term" value="C:membrane"/>
    <property type="evidence" value="ECO:0007669"/>
    <property type="project" value="UniProtKB-KW"/>
</dbReference>
<dbReference type="GO" id="GO:0000822">
    <property type="term" value="F:inositol hexakisphosphate binding"/>
    <property type="evidence" value="ECO:0000314"/>
    <property type="project" value="UniProtKB"/>
</dbReference>
<dbReference type="GO" id="GO:0016413">
    <property type="term" value="F:O-acetyltransferase activity"/>
    <property type="evidence" value="ECO:0000314"/>
    <property type="project" value="UniProtKB"/>
</dbReference>
<dbReference type="GO" id="GO:0090729">
    <property type="term" value="F:toxin activity"/>
    <property type="evidence" value="ECO:0000314"/>
    <property type="project" value="UniProtKB"/>
</dbReference>
<dbReference type="InterPro" id="IPR005083">
    <property type="entry name" value="YopJ-like"/>
</dbReference>
<dbReference type="Pfam" id="PF03421">
    <property type="entry name" value="Acetyltransf_14"/>
    <property type="match status" value="1"/>
</dbReference>
<comment type="function">
    <text evidence="3 4 5 7">Serine/threonine-protein acetyltransferase translocated into infected cells, which impairs host microtubule network and host immunity by mediating acetylation of target proteins (PubMed:20636323, PubMed:22319451, PubMed:24204266, PubMed:27525589). Blocks secretion in host cells by mediating acetylation of host tubulin, thereby impairing host microbubule network (PubMed:22319451). Impairs host cell immunity by mediating acetylation of host TIFY/JAZ transcription repressors (Arabidopsis thaliana TIFY10B/JAZ2, TIFY11A/JAZ5, TIFY11B/JAZ6, TIFY5A/JAZ8, TIFY9/JAZ10 and TIFY3B/JAZ12), thereby activating host jasmonate signaling (PubMed:24204266, PubMed:27525589).</text>
</comment>
<comment type="catalytic activity">
    <reaction evidence="1">
        <text>L-threonyl-[protein] + acetyl-CoA = O-acetyl-L-threonyl-[protein] + CoA</text>
        <dbReference type="Rhea" id="RHEA:65340"/>
        <dbReference type="Rhea" id="RHEA-COMP:11060"/>
        <dbReference type="Rhea" id="RHEA-COMP:16780"/>
        <dbReference type="ChEBI" id="CHEBI:30013"/>
        <dbReference type="ChEBI" id="CHEBI:57287"/>
        <dbReference type="ChEBI" id="CHEBI:57288"/>
        <dbReference type="ChEBI" id="CHEBI:141025"/>
    </reaction>
    <physiologicalReaction direction="left-to-right" evidence="1">
        <dbReference type="Rhea" id="RHEA:65341"/>
    </physiologicalReaction>
</comment>
<comment type="catalytic activity">
    <reaction evidence="1">
        <text>L-seryl-[protein] + acetyl-CoA = O-acetyl-L-seryl-[protein] + CoA</text>
        <dbReference type="Rhea" id="RHEA:59392"/>
        <dbReference type="Rhea" id="RHEA-COMP:9863"/>
        <dbReference type="Rhea" id="RHEA-COMP:15352"/>
        <dbReference type="ChEBI" id="CHEBI:29999"/>
        <dbReference type="ChEBI" id="CHEBI:57287"/>
        <dbReference type="ChEBI" id="CHEBI:57288"/>
        <dbReference type="ChEBI" id="CHEBI:141128"/>
    </reaction>
    <physiologicalReaction direction="left-to-right" evidence="1">
        <dbReference type="Rhea" id="RHEA:59393"/>
    </physiologicalReaction>
</comment>
<comment type="catalytic activity">
    <reaction evidence="4">
        <text>L-lysyl-[protein] + acetyl-CoA = N(6)-acetyl-L-lysyl-[protein] + CoA + H(+)</text>
        <dbReference type="Rhea" id="RHEA:45948"/>
        <dbReference type="Rhea" id="RHEA-COMP:9752"/>
        <dbReference type="Rhea" id="RHEA-COMP:10731"/>
        <dbReference type="ChEBI" id="CHEBI:15378"/>
        <dbReference type="ChEBI" id="CHEBI:29969"/>
        <dbReference type="ChEBI" id="CHEBI:57287"/>
        <dbReference type="ChEBI" id="CHEBI:57288"/>
        <dbReference type="ChEBI" id="CHEBI:61930"/>
    </reaction>
</comment>
<comment type="cofactor">
    <cofactor evidence="7">
        <name>1D-myo-inositol hexakisphosphate</name>
        <dbReference type="ChEBI" id="CHEBI:58130"/>
    </cofactor>
</comment>
<comment type="activity regulation">
    <text evidence="4 7">1D-myo-inositol hexakisphosphate activates protein-acetyltransferase activity via an allosteric mechanism: 1D-myo-inositol hexakisphosphate-binding induces a conformational rearrangement that stimulates the interaction with acetyl-CoA (PubMed:27525589). Acetyltransferase activity is activated by phytic acid (PubMed:22319451).</text>
</comment>
<comment type="subunit">
    <text evidence="5 8">Interacts with host plant JAZ proteins (e.g. Glycine max JAZ1 and Arabidospis thaliana TIFY10B/JAZ2, TIFY11A/JAZ5, TIFY11B/JAZ6, TIFY5A/JAZ8 and TIFY3B/JAZ12) and triggers their degradation (PubMed:24204266). Binds directly to SZE1 and SZE2 at the host plasma membrane; this interaction with a complex made of, at least, SZE1, BKN2/SZE2, ZAR1 and ZED1 triggers host immunity (PubMed:30947022).</text>
</comment>
<comment type="subcellular location">
    <subcellularLocation>
        <location evidence="12">Secreted</location>
    </subcellularLocation>
    <subcellularLocation>
        <location evidence="5">Host cell membrane</location>
    </subcellularLocation>
    <subcellularLocation>
        <location evidence="4">Host cytoplasm</location>
        <location evidence="4">Host cytoskeleton</location>
    </subcellularLocation>
    <subcellularLocation>
        <location evidence="14">Host nucleus</location>
    </subcellularLocation>
    <text evidence="12">Secreted via type III secretion system (T3SS).</text>
</comment>
<comment type="PTM">
    <text evidence="4 5 6">Autoacetylated at Lys-289; while autoacetylation at Lys-289 is required for virulence function to some extent, it is not essential.</text>
</comment>
<comment type="similarity">
    <text evidence="11">Belongs to the acetyltransferase YopJ family.</text>
</comment>
<feature type="chain" id="PRO_0000451626" description="Serine/threonine-protein acetyltransferase HopZ1a">
    <location>
        <begin position="1"/>
        <end position="369"/>
    </location>
</feature>
<feature type="region of interest" description="Disordered" evidence="2">
    <location>
        <begin position="1"/>
        <end position="46"/>
    </location>
</feature>
<feature type="compositionally biased region" description="Basic and acidic residues" evidence="2">
    <location>
        <begin position="19"/>
        <end position="46"/>
    </location>
</feature>
<feature type="active site" evidence="7">
    <location>
        <position position="150"/>
    </location>
</feature>
<feature type="active site" evidence="7">
    <location>
        <position position="170"/>
    </location>
</feature>
<feature type="active site" evidence="7 13">
    <location>
        <position position="216"/>
    </location>
</feature>
<feature type="binding site" evidence="16">
    <location>
        <position position="49"/>
    </location>
    <ligand>
        <name>1D-myo-inositol hexakisphosphate</name>
        <dbReference type="ChEBI" id="CHEBI:58130"/>
    </ligand>
</feature>
<feature type="binding site" evidence="16 17">
    <location>
        <position position="53"/>
    </location>
    <ligand>
        <name>1D-myo-inositol hexakisphosphate</name>
        <dbReference type="ChEBI" id="CHEBI:58130"/>
    </ligand>
</feature>
<feature type="binding site" evidence="16 17">
    <location>
        <position position="106"/>
    </location>
    <ligand>
        <name>1D-myo-inositol hexakisphosphate</name>
        <dbReference type="ChEBI" id="CHEBI:58130"/>
    </ligand>
</feature>
<feature type="binding site" evidence="17">
    <location>
        <position position="150"/>
    </location>
    <ligand>
        <name>CoA</name>
        <dbReference type="ChEBI" id="CHEBI:57287"/>
    </ligand>
</feature>
<feature type="binding site" evidence="17">
    <location>
        <position position="177"/>
    </location>
    <ligand>
        <name>CoA</name>
        <dbReference type="ChEBI" id="CHEBI:57287"/>
    </ligand>
</feature>
<feature type="binding site" evidence="17">
    <location>
        <begin position="211"/>
        <end position="212"/>
    </location>
    <ligand>
        <name>CoA</name>
        <dbReference type="ChEBI" id="CHEBI:57287"/>
    </ligand>
</feature>
<feature type="binding site" evidence="16 17">
    <location>
        <position position="222"/>
    </location>
    <ligand>
        <name>1D-myo-inositol hexakisphosphate</name>
        <dbReference type="ChEBI" id="CHEBI:58130"/>
    </ligand>
</feature>
<feature type="binding site" evidence="16 17">
    <location>
        <begin position="226"/>
        <end position="229"/>
    </location>
    <ligand>
        <name>1D-myo-inositol hexakisphosphate</name>
        <dbReference type="ChEBI" id="CHEBI:58130"/>
    </ligand>
</feature>
<feature type="binding site" evidence="16 17">
    <location>
        <begin position="289"/>
        <end position="290"/>
    </location>
    <ligand>
        <name>1D-myo-inositol hexakisphosphate</name>
        <dbReference type="ChEBI" id="CHEBI:58130"/>
    </ligand>
</feature>
<feature type="binding site" evidence="17">
    <location>
        <begin position="292"/>
        <end position="295"/>
    </location>
    <ligand>
        <name>CoA</name>
        <dbReference type="ChEBI" id="CHEBI:57287"/>
    </ligand>
</feature>
<feature type="binding site" evidence="16 17">
    <location>
        <begin position="314"/>
        <end position="317"/>
    </location>
    <ligand>
        <name>1D-myo-inositol hexakisphosphate</name>
        <dbReference type="ChEBI" id="CHEBI:58130"/>
    </ligand>
</feature>
<feature type="binding site" evidence="16 17">
    <location>
        <position position="326"/>
    </location>
    <ligand>
        <name>1D-myo-inositol hexakisphosphate</name>
        <dbReference type="ChEBI" id="CHEBI:58130"/>
    </ligand>
</feature>
<feature type="binding site" evidence="17">
    <location>
        <begin position="331"/>
        <end position="334"/>
    </location>
    <ligand>
        <name>CoA</name>
        <dbReference type="ChEBI" id="CHEBI:57287"/>
    </ligand>
</feature>
<feature type="binding site" evidence="17">
    <location>
        <begin position="344"/>
        <end position="348"/>
    </location>
    <ligand>
        <name>CoA</name>
        <dbReference type="ChEBI" id="CHEBI:57287"/>
    </ligand>
</feature>
<feature type="binding site" evidence="16 17">
    <location>
        <position position="358"/>
    </location>
    <ligand>
        <name>1D-myo-inositol hexakisphosphate</name>
        <dbReference type="ChEBI" id="CHEBI:58130"/>
    </ligand>
</feature>
<feature type="binding site" evidence="16 17">
    <location>
        <position position="362"/>
    </location>
    <ligand>
        <name>1D-myo-inositol hexakisphosphate</name>
        <dbReference type="ChEBI" id="CHEBI:58130"/>
    </ligand>
</feature>
<feature type="modified residue" description="N6-acetyllysine; by autocatalysis" evidence="4 6">
    <location>
        <position position="289"/>
    </location>
</feature>
<feature type="mutagenesis site" description="Abolished ability to acetylate host TIFY9/JAZ10; when associate with A-295 and A-348." evidence="7">
    <original>K</original>
    <variation>A</variation>
    <location>
        <position position="211"/>
    </location>
</feature>
<feature type="mutagenesis site" description="Abolished acetyltransferase activity. Reduced ability to trigger host TIFY/JAZ proteins degradation and altered host infection." evidence="4 5 6 7">
    <original>C</original>
    <variation>A</variation>
    <location>
        <position position="216"/>
    </location>
</feature>
<feature type="mutagenesis site" description="Abolished binding to 1D-myo-inositol hexakisphosphate and ability to acetylate host TIFY9/JAZ10." evidence="7">
    <original>K</original>
    <variation>E</variation>
    <location>
        <position position="226"/>
    </location>
</feature>
<feature type="mutagenesis site" description="Abolished binding to 1D-myo-inositol hexakisphosphate and ability to acetylate host TIFY9/JAZ10." evidence="7">
    <original>K</original>
    <variation>E</variation>
    <location>
        <position position="289"/>
    </location>
</feature>
<feature type="mutagenesis site" description="Abolished autoacetylation and decreased virulence. Virulence is however not abolished." evidence="4 6">
    <original>K</original>
    <variation>R</variation>
    <location>
        <position position="289"/>
    </location>
</feature>
<feature type="mutagenesis site" description="Abolished ability to acetylate host TIFY9/JAZ10; when associate with A-211 and A-348." evidence="7">
    <original>T</original>
    <variation>A</variation>
    <location>
        <position position="295"/>
    </location>
</feature>
<feature type="mutagenesis site" description="Abolished binding to 1D-myo-inositol hexakisphosphate and ability to acetylate host TIFY9/JAZ10." evidence="7">
    <original>R</original>
    <variation>E</variation>
    <location>
        <position position="326"/>
    </location>
</feature>
<feature type="mutagenesis site" description="Abolished ability to acetylate host TIFY9/JAZ10; when associate with A-211 and A-295." evidence="7">
    <original>F</original>
    <variation>A</variation>
    <location>
        <position position="348"/>
    </location>
</feature>
<feature type="helix" evidence="18">
    <location>
        <begin position="48"/>
        <end position="63"/>
    </location>
</feature>
<feature type="helix" evidence="18">
    <location>
        <begin position="67"/>
        <end position="80"/>
    </location>
</feature>
<feature type="helix" evidence="18">
    <location>
        <begin position="88"/>
        <end position="106"/>
    </location>
</feature>
<feature type="strand" evidence="18">
    <location>
        <begin position="112"/>
        <end position="114"/>
    </location>
</feature>
<feature type="helix" evidence="18">
    <location>
        <begin position="118"/>
        <end position="125"/>
    </location>
</feature>
<feature type="strand" evidence="19">
    <location>
        <begin position="126"/>
        <end position="128"/>
    </location>
</feature>
<feature type="strand" evidence="18">
    <location>
        <begin position="131"/>
        <end position="137"/>
    </location>
</feature>
<feature type="turn" evidence="18">
    <location>
        <begin position="142"/>
        <end position="144"/>
    </location>
</feature>
<feature type="strand" evidence="18">
    <location>
        <begin position="152"/>
        <end position="157"/>
    </location>
</feature>
<feature type="strand" evidence="18">
    <location>
        <begin position="165"/>
        <end position="172"/>
    </location>
</feature>
<feature type="helix" evidence="18">
    <location>
        <begin position="180"/>
        <end position="194"/>
    </location>
</feature>
<feature type="helix" evidence="18">
    <location>
        <begin position="199"/>
        <end position="201"/>
    </location>
</feature>
<feature type="strand" evidence="18">
    <location>
        <begin position="202"/>
        <end position="206"/>
    </location>
</feature>
<feature type="strand" evidence="18">
    <location>
        <begin position="211"/>
        <end position="213"/>
    </location>
</feature>
<feature type="helix" evidence="18">
    <location>
        <begin position="216"/>
        <end position="229"/>
    </location>
</feature>
<feature type="helix" evidence="18">
    <location>
        <begin position="231"/>
        <end position="242"/>
    </location>
</feature>
<feature type="helix" evidence="18">
    <location>
        <begin position="249"/>
        <end position="252"/>
    </location>
</feature>
<feature type="helix" evidence="18">
    <location>
        <begin position="253"/>
        <end position="255"/>
    </location>
</feature>
<feature type="helix" evidence="18">
    <location>
        <begin position="257"/>
        <end position="265"/>
    </location>
</feature>
<feature type="strand" evidence="18">
    <location>
        <begin position="275"/>
        <end position="278"/>
    </location>
</feature>
<feature type="helix" evidence="18">
    <location>
        <begin position="279"/>
        <end position="282"/>
    </location>
</feature>
<feature type="helix" evidence="18">
    <location>
        <begin position="285"/>
        <end position="288"/>
    </location>
</feature>
<feature type="helix" evidence="18">
    <location>
        <begin position="294"/>
        <end position="301"/>
    </location>
</feature>
<feature type="strand" evidence="18">
    <location>
        <begin position="309"/>
        <end position="311"/>
    </location>
</feature>
<feature type="strand" evidence="18">
    <location>
        <begin position="317"/>
        <end position="319"/>
    </location>
</feature>
<feature type="helix" evidence="18">
    <location>
        <begin position="323"/>
        <end position="329"/>
    </location>
</feature>
<feature type="helix" evidence="18">
    <location>
        <begin position="351"/>
        <end position="367"/>
    </location>
</feature>
<gene>
    <name evidence="10" type="primary">hopZ1a</name>
    <name evidence="15" type="ORF">ALP25_03258</name>
</gene>
<organism>
    <name type="scientific">Pseudomonas syringae pv. syringae</name>
    <dbReference type="NCBI Taxonomy" id="321"/>
    <lineage>
        <taxon>Bacteria</taxon>
        <taxon>Pseudomonadati</taxon>
        <taxon>Pseudomonadota</taxon>
        <taxon>Gammaproteobacteria</taxon>
        <taxon>Pseudomonadales</taxon>
        <taxon>Pseudomonadaceae</taxon>
        <taxon>Pseudomonas</taxon>
        <taxon>Pseudomonas syringae</taxon>
    </lineage>
</organism>
<geneLocation type="plasmid">
    <name>pPSR1</name>
</geneLocation>
<reference key="1">
    <citation type="journal article" date="2004" name="Mol. Genet. Genomics">
        <title>Complete nucleotide sequence and analysis of pPSR1 (72,601 bp), a pPT23A-family plasmid from Pseudomonas syringae pv. syringae A2.</title>
        <authorList>
            <person name="Sundin G.W."/>
            <person name="Mayfield C.T."/>
            <person name="Zhao Y."/>
            <person name="Gunasekera T.S."/>
            <person name="Foster G.L."/>
            <person name="Ullrich M.S."/>
        </authorList>
    </citation>
    <scope>NUCLEOTIDE SEQUENCE [GENOMIC DNA]</scope>
    <source>
        <strain>A2</strain>
    </source>
</reference>
<reference key="2">
    <citation type="submission" date="2018-08" db="EMBL/GenBank/DDBJ databases">
        <title>Recombination of ecologically and evolutionarily significant loci maintains genetic cohesion in the Pseudomonas syringae species complex.</title>
        <authorList>
            <person name="Dillon M."/>
            <person name="Thakur S."/>
            <person name="Almeida R.N.D."/>
            <person name="Weir B.S."/>
            <person name="Guttman D.S."/>
        </authorList>
    </citation>
    <scope>NUCLEOTIDE SEQUENCE [LARGE SCALE GENOMIC DNA]</scope>
    <source>
        <strain>ICMP 4917</strain>
    </source>
</reference>
<reference key="3">
    <citation type="journal article" date="2010" name="New Phytol.">
        <title>The Pseudomonas syringae effector protein HopZ1a suppresses effector-triggered immunity.</title>
        <authorList>
            <person name="Macho A.P."/>
            <person name="Guevara C.M."/>
            <person name="Tornero P."/>
            <person name="Ruiz-Albert J."/>
            <person name="Beuzon C.R."/>
        </authorList>
    </citation>
    <scope>FUNCTION</scope>
</reference>
<reference key="4">
    <citation type="journal article" date="2012" name="PLoS Pathog.">
        <title>A bacterial acetyltransferase destroys plant microtubule networks and blocks secretion.</title>
        <authorList>
            <person name="Lee A.H."/>
            <person name="Hurley B."/>
            <person name="Felsensteiner C."/>
            <person name="Yea C."/>
            <person name="Ckurshumova W."/>
            <person name="Bartetzko V."/>
            <person name="Wang P.W."/>
            <person name="Quach V."/>
            <person name="Lewis J.D."/>
            <person name="Liu Y.C."/>
            <person name="Boernke F."/>
            <person name="Angers S."/>
            <person name="Wilde A."/>
            <person name="Guttman D.S."/>
            <person name="Desveaux D."/>
        </authorList>
    </citation>
    <scope>FUNCTION</scope>
    <scope>CATALYTIC ACTIVITY</scope>
    <scope>ACTIVITY REGULATION</scope>
    <scope>SUBCELLULAR LOCATION</scope>
    <scope>ACETYLATION AT LYS-289</scope>
    <scope>MUTAGENESIS OF CYS-216 AND LYS-289</scope>
</reference>
<reference key="5">
    <citation type="journal article" date="2013" name="PLoS Pathog.">
        <title>Bacterial effector activates jasmonate signaling by directly targeting JAZ transcriptional repressors.</title>
        <authorList>
            <person name="Jiang S."/>
            <person name="Yao J."/>
            <person name="Ma K.-W."/>
            <person name="Zhou H."/>
            <person name="Song J."/>
            <person name="He S.Y."/>
            <person name="Ma W."/>
        </authorList>
    </citation>
    <scope>FUNCTION</scope>
    <scope>CATALYTIC ACTIVITY</scope>
    <scope>SUBCELLULAR LOCATION</scope>
    <scope>MUTAGENESIS OF CYS-216</scope>
    <scope>INTERACTION WITH ARABIDOPSIS THALIANA TIFY10B/JAZ2; TIFY11A/JAZ5; TIFY11B/JAZ6; TIFY5A/JAZ8; TIFY3B/JAZ12 AND GLYCINE MAX JAZ1</scope>
    <scope>AUTOACETYLATION</scope>
</reference>
<reference key="6">
    <citation type="journal article" date="2015" name="Front. Microbiol.">
        <title>Auto-acetylation on K289 is not essential for HopZ1a-mediated plant defense suppression.</title>
        <authorList>
            <person name="Rufian J.S."/>
            <person name="Lucia A."/>
            <person name="Macho A.P."/>
            <person name="Orozco-Navarrete B."/>
            <person name="Arroyo-Mateos M."/>
            <person name="Bejarano E.R."/>
            <person name="Beuzon C.R."/>
            <person name="Ruiz-Albert J."/>
        </authorList>
    </citation>
    <scope>ACETYLATION AT LYS-289</scope>
    <scope>MUTAGENESIS OF CYS-216 AND LYS-289</scope>
</reference>
<reference key="7">
    <citation type="journal article" date="2019" name="Mol. Plant">
        <title>Two Arabidopsis receptor-like cytoplasmic kinases SZE1 and SZE2 associate with the ZAR1-ZED1 complex and are required for effector-triggered immunity.</title>
        <authorList>
            <person name="Liu C."/>
            <person name="Cui D."/>
            <person name="Zhao J."/>
            <person name="Liu N."/>
            <person name="Wang B."/>
            <person name="Liu J."/>
            <person name="Xu E."/>
            <person name="Hu Z."/>
            <person name="Ren D."/>
            <person name="Tang D."/>
            <person name="Hu Y."/>
        </authorList>
    </citation>
    <scope>INTERACTION WITH SZE1 AND BKN2/SZE2</scope>
</reference>
<reference evidence="16 17" key="8">
    <citation type="journal article" date="2016" name="Nat. Struct. Mol. Biol.">
        <title>Structure of a pathogen effector reveals the enzymatic mechanism of a novel acetyltransferase family.</title>
        <authorList>
            <person name="Zhang Z.M."/>
            <person name="Ma K.W."/>
            <person name="Yuan S."/>
            <person name="Luo Y."/>
            <person name="Jiang S."/>
            <person name="Hawara E."/>
            <person name="Pan S."/>
            <person name="Ma W."/>
            <person name="Song J."/>
        </authorList>
    </citation>
    <scope>X-RAY CRYSTALLOGRAPHY (2.00 ANGSTROMS) OF 29-369 IN COMPLEX WITH COENZYME A AND 1D-MYO-INOSITOL HEXAKISPHOSPHATE</scope>
    <scope>FUNCTION</scope>
    <scope>ACTIVE SITES</scope>
    <scope>COFACTOR</scope>
    <scope>ACTIVITY REGULATION</scope>
    <scope>MUTAGENESIS OF LYS-211; CYS-216; LYS-226; LYS-289; THR-295; ARG-326 AND PHE-348</scope>
</reference>
<name>HOZ1A_PSESY</name>
<proteinExistence type="evidence at protein level"/>
<evidence type="ECO:0000250" key="1">
    <source>
        <dbReference type="UniProtKB" id="O68718"/>
    </source>
</evidence>
<evidence type="ECO:0000256" key="2">
    <source>
        <dbReference type="SAM" id="MobiDB-lite"/>
    </source>
</evidence>
<evidence type="ECO:0000269" key="3">
    <source>
    </source>
</evidence>
<evidence type="ECO:0000269" key="4">
    <source>
    </source>
</evidence>
<evidence type="ECO:0000269" key="5">
    <source>
    </source>
</evidence>
<evidence type="ECO:0000269" key="6">
    <source>
    </source>
</evidence>
<evidence type="ECO:0000269" key="7">
    <source>
    </source>
</evidence>
<evidence type="ECO:0000269" key="8">
    <source>
    </source>
</evidence>
<evidence type="ECO:0000303" key="9">
    <source>
    </source>
</evidence>
<evidence type="ECO:0000303" key="10">
    <source>
    </source>
</evidence>
<evidence type="ECO:0000305" key="11"/>
<evidence type="ECO:0000305" key="12">
    <source>
    </source>
</evidence>
<evidence type="ECO:0000305" key="13">
    <source>
    </source>
</evidence>
<evidence type="ECO:0000305" key="14">
    <source>
    </source>
</evidence>
<evidence type="ECO:0000312" key="15">
    <source>
        <dbReference type="EMBL" id="RMU63652.1"/>
    </source>
</evidence>
<evidence type="ECO:0007744" key="16">
    <source>
        <dbReference type="PDB" id="5KLP"/>
    </source>
</evidence>
<evidence type="ECO:0007744" key="17">
    <source>
        <dbReference type="PDB" id="5KLQ"/>
    </source>
</evidence>
<evidence type="ECO:0007829" key="18">
    <source>
        <dbReference type="PDB" id="5KLP"/>
    </source>
</evidence>
<evidence type="ECO:0007829" key="19">
    <source>
        <dbReference type="PDB" id="5KLQ"/>
    </source>
</evidence>
<sequence>MGNVCVGGSRMSHQVYSPDRADTPPRSERNTPDRRQRAAGDAERTQSMRLQQKINDLKPYVRHARGPIKAYGQAALDRASGKKTSVSFAELDATHLDAMVYIENQRNPGLNLKHFRDHKELIQALQSDGPSAFRAIFPQTCPETGQTLKHHVMADVRLHQGGAPTIIITEPAVIVGARYQQLQRHNLTLEDLSESGVPLSQVAIIETQAQKTSDDCVMYSLNYAIKAHKNAAQFDDIHHGLQHGTLSTESESRARTTLGALEASSSYSVMHEGAHAAFGADVLPVDFYKHGASLTQAKQLMKRPDGRMAGRVNSEGHSEAENLVQRNQAFRVKRRELLDDETPSNTQFSASIDGFRLQEIKRVLAEEQR</sequence>
<accession>Q6VE93</accession>